<organism>
    <name type="scientific">Enterobacter sp. (strain 638)</name>
    <dbReference type="NCBI Taxonomy" id="399742"/>
    <lineage>
        <taxon>Bacteria</taxon>
        <taxon>Pseudomonadati</taxon>
        <taxon>Pseudomonadota</taxon>
        <taxon>Gammaproteobacteria</taxon>
        <taxon>Enterobacterales</taxon>
        <taxon>Enterobacteriaceae</taxon>
        <taxon>Enterobacter</taxon>
    </lineage>
</organism>
<gene>
    <name evidence="1" type="primary">truB</name>
    <name type="ordered locus">Ent638_3603</name>
</gene>
<keyword id="KW-0413">Isomerase</keyword>
<keyword id="KW-0819">tRNA processing</keyword>
<feature type="chain" id="PRO_1000084590" description="tRNA pseudouridine synthase B">
    <location>
        <begin position="1"/>
        <end position="314"/>
    </location>
</feature>
<feature type="active site" description="Nucleophile" evidence="1">
    <location>
        <position position="48"/>
    </location>
</feature>
<feature type="binding site" evidence="1">
    <location>
        <position position="43"/>
    </location>
    <ligand>
        <name>substrate</name>
    </ligand>
</feature>
<feature type="binding site" evidence="1">
    <location>
        <position position="76"/>
    </location>
    <ligand>
        <name>substrate</name>
    </ligand>
</feature>
<feature type="binding site" evidence="1">
    <location>
        <position position="179"/>
    </location>
    <ligand>
        <name>substrate</name>
    </ligand>
</feature>
<feature type="binding site" evidence="1">
    <location>
        <position position="200"/>
    </location>
    <ligand>
        <name>substrate</name>
    </ligand>
</feature>
<name>TRUB_ENT38</name>
<sequence>MSRPRRRGRDVHGVLLLDKPQGASSNDVLQKVKRIYNANRAGHTGALDPLATGMLPVCLGEATKFSQYLLDSDKRYRVIAKLGQRTDTSDADGQVVEERPVTFSAEQLDAALESFRGETQQVPSMYSALKYQGKKLYEYARQGIDVPREARPITVYELLFIRHEGDELELEVHCSKGTYIRTIIDDLGEKLGCGAHVIYLRRLAVSKYPVDRMVTLEQLRELVEQAETQGISPADLLDPLLMPMDSPASDFPVVNLPLTSSVYFKNGNPVRTTETPQRGLVRVTEGEENKFIGMGEIDDEGRVAPRRLVVEYPL</sequence>
<evidence type="ECO:0000255" key="1">
    <source>
        <dbReference type="HAMAP-Rule" id="MF_01080"/>
    </source>
</evidence>
<protein>
    <recommendedName>
        <fullName evidence="1">tRNA pseudouridine synthase B</fullName>
        <ecNumber evidence="1">5.4.99.25</ecNumber>
    </recommendedName>
    <alternativeName>
        <fullName evidence="1">tRNA pseudouridine(55) synthase</fullName>
        <shortName evidence="1">Psi55 synthase</shortName>
    </alternativeName>
    <alternativeName>
        <fullName evidence="1">tRNA pseudouridylate synthase</fullName>
    </alternativeName>
    <alternativeName>
        <fullName evidence="1">tRNA-uridine isomerase</fullName>
    </alternativeName>
</protein>
<reference key="1">
    <citation type="journal article" date="2010" name="PLoS Genet.">
        <title>Genome sequence of the plant growth promoting endophytic bacterium Enterobacter sp. 638.</title>
        <authorList>
            <person name="Taghavi S."/>
            <person name="van der Lelie D."/>
            <person name="Hoffman A."/>
            <person name="Zhang Y.B."/>
            <person name="Walla M.D."/>
            <person name="Vangronsveld J."/>
            <person name="Newman L."/>
            <person name="Monchy S."/>
        </authorList>
    </citation>
    <scope>NUCLEOTIDE SEQUENCE [LARGE SCALE GENOMIC DNA]</scope>
    <source>
        <strain>638</strain>
    </source>
</reference>
<comment type="function">
    <text evidence="1">Responsible for synthesis of pseudouridine from uracil-55 in the psi GC loop of transfer RNAs.</text>
</comment>
<comment type="catalytic activity">
    <reaction evidence="1">
        <text>uridine(55) in tRNA = pseudouridine(55) in tRNA</text>
        <dbReference type="Rhea" id="RHEA:42532"/>
        <dbReference type="Rhea" id="RHEA-COMP:10101"/>
        <dbReference type="Rhea" id="RHEA-COMP:10102"/>
        <dbReference type="ChEBI" id="CHEBI:65314"/>
        <dbReference type="ChEBI" id="CHEBI:65315"/>
        <dbReference type="EC" id="5.4.99.25"/>
    </reaction>
</comment>
<comment type="similarity">
    <text evidence="1">Belongs to the pseudouridine synthase TruB family. Type 1 subfamily.</text>
</comment>
<accession>A4WEY1</accession>
<dbReference type="EC" id="5.4.99.25" evidence="1"/>
<dbReference type="EMBL" id="CP000653">
    <property type="protein sequence ID" value="ABP62261.1"/>
    <property type="molecule type" value="Genomic_DNA"/>
</dbReference>
<dbReference type="RefSeq" id="WP_015960586.1">
    <property type="nucleotide sequence ID" value="NC_009436.1"/>
</dbReference>
<dbReference type="SMR" id="A4WEY1"/>
<dbReference type="STRING" id="399742.Ent638_3603"/>
<dbReference type="KEGG" id="ent:Ent638_3603"/>
<dbReference type="eggNOG" id="COG0130">
    <property type="taxonomic scope" value="Bacteria"/>
</dbReference>
<dbReference type="HOGENOM" id="CLU_032087_0_3_6"/>
<dbReference type="OrthoDB" id="9802309at2"/>
<dbReference type="Proteomes" id="UP000000230">
    <property type="component" value="Chromosome"/>
</dbReference>
<dbReference type="GO" id="GO:0003723">
    <property type="term" value="F:RNA binding"/>
    <property type="evidence" value="ECO:0007669"/>
    <property type="project" value="InterPro"/>
</dbReference>
<dbReference type="GO" id="GO:0160148">
    <property type="term" value="F:tRNA pseudouridine(55) synthase activity"/>
    <property type="evidence" value="ECO:0007669"/>
    <property type="project" value="UniProtKB-EC"/>
</dbReference>
<dbReference type="GO" id="GO:1990481">
    <property type="term" value="P:mRNA pseudouridine synthesis"/>
    <property type="evidence" value="ECO:0007669"/>
    <property type="project" value="TreeGrafter"/>
</dbReference>
<dbReference type="GO" id="GO:0031119">
    <property type="term" value="P:tRNA pseudouridine synthesis"/>
    <property type="evidence" value="ECO:0007669"/>
    <property type="project" value="UniProtKB-UniRule"/>
</dbReference>
<dbReference type="CDD" id="cd02573">
    <property type="entry name" value="PseudoU_synth_EcTruB"/>
    <property type="match status" value="1"/>
</dbReference>
<dbReference type="CDD" id="cd21152">
    <property type="entry name" value="PUA_TruB_bacterial"/>
    <property type="match status" value="1"/>
</dbReference>
<dbReference type="FunFam" id="2.30.130.10:FF:000004">
    <property type="entry name" value="tRNA pseudouridine synthase B"/>
    <property type="match status" value="1"/>
</dbReference>
<dbReference type="FunFam" id="3.30.2350.10:FF:000003">
    <property type="entry name" value="tRNA pseudouridine synthase B"/>
    <property type="match status" value="1"/>
</dbReference>
<dbReference type="Gene3D" id="3.30.2350.10">
    <property type="entry name" value="Pseudouridine synthase"/>
    <property type="match status" value="1"/>
</dbReference>
<dbReference type="Gene3D" id="2.30.130.10">
    <property type="entry name" value="PUA domain"/>
    <property type="match status" value="1"/>
</dbReference>
<dbReference type="HAMAP" id="MF_01080">
    <property type="entry name" value="TruB_bact"/>
    <property type="match status" value="1"/>
</dbReference>
<dbReference type="InterPro" id="IPR020103">
    <property type="entry name" value="PsdUridine_synth_cat_dom_sf"/>
</dbReference>
<dbReference type="InterPro" id="IPR002501">
    <property type="entry name" value="PsdUridine_synth_N"/>
</dbReference>
<dbReference type="InterPro" id="IPR015947">
    <property type="entry name" value="PUA-like_sf"/>
</dbReference>
<dbReference type="InterPro" id="IPR036974">
    <property type="entry name" value="PUA_sf"/>
</dbReference>
<dbReference type="InterPro" id="IPR014780">
    <property type="entry name" value="tRNA_psdUridine_synth_TruB"/>
</dbReference>
<dbReference type="InterPro" id="IPR015240">
    <property type="entry name" value="tRNA_sdUridine_synth_fam1_C"/>
</dbReference>
<dbReference type="InterPro" id="IPR032819">
    <property type="entry name" value="TruB_C"/>
</dbReference>
<dbReference type="NCBIfam" id="TIGR00431">
    <property type="entry name" value="TruB"/>
    <property type="match status" value="1"/>
</dbReference>
<dbReference type="PANTHER" id="PTHR13767:SF2">
    <property type="entry name" value="PSEUDOURIDYLATE SYNTHASE TRUB1"/>
    <property type="match status" value="1"/>
</dbReference>
<dbReference type="PANTHER" id="PTHR13767">
    <property type="entry name" value="TRNA-PSEUDOURIDINE SYNTHASE"/>
    <property type="match status" value="1"/>
</dbReference>
<dbReference type="Pfam" id="PF09157">
    <property type="entry name" value="TruB-C_2"/>
    <property type="match status" value="1"/>
</dbReference>
<dbReference type="Pfam" id="PF16198">
    <property type="entry name" value="TruB_C_2"/>
    <property type="match status" value="1"/>
</dbReference>
<dbReference type="Pfam" id="PF01509">
    <property type="entry name" value="TruB_N"/>
    <property type="match status" value="1"/>
</dbReference>
<dbReference type="SUPFAM" id="SSF55120">
    <property type="entry name" value="Pseudouridine synthase"/>
    <property type="match status" value="1"/>
</dbReference>
<dbReference type="SUPFAM" id="SSF88697">
    <property type="entry name" value="PUA domain-like"/>
    <property type="match status" value="1"/>
</dbReference>
<proteinExistence type="inferred from homology"/>